<feature type="chain" id="PRO_0000343037" description="Golgi apparatus membrane protein tvp23">
    <location>
        <begin position="1"/>
        <end position="191"/>
    </location>
</feature>
<feature type="transmembrane region" description="Helical" evidence="2">
    <location>
        <begin position="16"/>
        <end position="36"/>
    </location>
</feature>
<feature type="transmembrane region" description="Helical" evidence="2">
    <location>
        <begin position="38"/>
        <end position="58"/>
    </location>
</feature>
<feature type="transmembrane region" description="Helical" evidence="2">
    <location>
        <begin position="110"/>
        <end position="130"/>
    </location>
</feature>
<feature type="transmembrane region" description="Helical" evidence="2">
    <location>
        <begin position="136"/>
        <end position="156"/>
    </location>
</feature>
<comment type="function">
    <text evidence="1">Golgi membrane protein involved in vesicular trafficking.</text>
</comment>
<comment type="subcellular location">
    <subcellularLocation>
        <location evidence="1">Golgi apparatus membrane</location>
        <topology evidence="1">Multi-pass membrane protein</topology>
    </subcellularLocation>
</comment>
<comment type="similarity">
    <text evidence="3">Belongs to the TVP23 family.</text>
</comment>
<accession>Q4WQJ5</accession>
<name>TVP23_ASPFU</name>
<sequence length="191" mass="21484">MDQPLQAQQGELNWRLSAHPITLLFFLGFRTSALLMYLFGVLFIKNFVLVFILTLLLLSADFYYLKNIAGRRLVGLRWWNEVNTATGDSHWVFESSDPATRTISATDKRFFWLSLYVTPALWIGLAVLAIVRLSSVIWLSLVAIALVLTITNTVAFSRCDRFSQASTYANRAFGGNIVNNLAGGLLGRLFK</sequence>
<gene>
    <name type="primary">tvp23</name>
    <name type="ORF">AFUA_4G13040</name>
</gene>
<dbReference type="EMBL" id="AAHF01000005">
    <property type="protein sequence ID" value="EAL89489.1"/>
    <property type="molecule type" value="Genomic_DNA"/>
</dbReference>
<dbReference type="RefSeq" id="XP_751527.1">
    <property type="nucleotide sequence ID" value="XM_746434.1"/>
</dbReference>
<dbReference type="FunCoup" id="Q4WQJ5">
    <property type="interactions" value="382"/>
</dbReference>
<dbReference type="STRING" id="330879.Q4WQJ5"/>
<dbReference type="EnsemblFungi" id="EAL89489">
    <property type="protein sequence ID" value="EAL89489"/>
    <property type="gene ID" value="AFUA_4G13040"/>
</dbReference>
<dbReference type="GeneID" id="3509182"/>
<dbReference type="KEGG" id="afm:AFUA_4G13040"/>
<dbReference type="VEuPathDB" id="FungiDB:Afu4g13040"/>
<dbReference type="eggNOG" id="KOG3195">
    <property type="taxonomic scope" value="Eukaryota"/>
</dbReference>
<dbReference type="HOGENOM" id="CLU_074845_1_1_1"/>
<dbReference type="InParanoid" id="Q4WQJ5"/>
<dbReference type="OMA" id="KMIWWID"/>
<dbReference type="OrthoDB" id="2151161at2759"/>
<dbReference type="Proteomes" id="UP000002530">
    <property type="component" value="Chromosome 4"/>
</dbReference>
<dbReference type="GO" id="GO:0000139">
    <property type="term" value="C:Golgi membrane"/>
    <property type="evidence" value="ECO:0000318"/>
    <property type="project" value="GO_Central"/>
</dbReference>
<dbReference type="GO" id="GO:0009306">
    <property type="term" value="P:protein secretion"/>
    <property type="evidence" value="ECO:0000318"/>
    <property type="project" value="GO_Central"/>
</dbReference>
<dbReference type="GO" id="GO:0016192">
    <property type="term" value="P:vesicle-mediated transport"/>
    <property type="evidence" value="ECO:0000318"/>
    <property type="project" value="GO_Central"/>
</dbReference>
<dbReference type="InterPro" id="IPR008564">
    <property type="entry name" value="TVP23-like"/>
</dbReference>
<dbReference type="PANTHER" id="PTHR13019">
    <property type="entry name" value="GOLGI APPARATUS MEMBRANE PROTEIN TVP23"/>
    <property type="match status" value="1"/>
</dbReference>
<dbReference type="PANTHER" id="PTHR13019:SF7">
    <property type="entry name" value="GOLGI APPARATUS MEMBRANE PROTEIN TVP23"/>
    <property type="match status" value="1"/>
</dbReference>
<dbReference type="Pfam" id="PF05832">
    <property type="entry name" value="DUF846"/>
    <property type="match status" value="1"/>
</dbReference>
<reference key="1">
    <citation type="journal article" date="2005" name="Nature">
        <title>Genomic sequence of the pathogenic and allergenic filamentous fungus Aspergillus fumigatus.</title>
        <authorList>
            <person name="Nierman W.C."/>
            <person name="Pain A."/>
            <person name="Anderson M.J."/>
            <person name="Wortman J.R."/>
            <person name="Kim H.S."/>
            <person name="Arroyo J."/>
            <person name="Berriman M."/>
            <person name="Abe K."/>
            <person name="Archer D.B."/>
            <person name="Bermejo C."/>
            <person name="Bennett J.W."/>
            <person name="Bowyer P."/>
            <person name="Chen D."/>
            <person name="Collins M."/>
            <person name="Coulsen R."/>
            <person name="Davies R."/>
            <person name="Dyer P.S."/>
            <person name="Farman M.L."/>
            <person name="Fedorova N."/>
            <person name="Fedorova N.D."/>
            <person name="Feldblyum T.V."/>
            <person name="Fischer R."/>
            <person name="Fosker N."/>
            <person name="Fraser A."/>
            <person name="Garcia J.L."/>
            <person name="Garcia M.J."/>
            <person name="Goble A."/>
            <person name="Goldman G.H."/>
            <person name="Gomi K."/>
            <person name="Griffith-Jones S."/>
            <person name="Gwilliam R."/>
            <person name="Haas B.J."/>
            <person name="Haas H."/>
            <person name="Harris D.E."/>
            <person name="Horiuchi H."/>
            <person name="Huang J."/>
            <person name="Humphray S."/>
            <person name="Jimenez J."/>
            <person name="Keller N."/>
            <person name="Khouri H."/>
            <person name="Kitamoto K."/>
            <person name="Kobayashi T."/>
            <person name="Konzack S."/>
            <person name="Kulkarni R."/>
            <person name="Kumagai T."/>
            <person name="Lafton A."/>
            <person name="Latge J.-P."/>
            <person name="Li W."/>
            <person name="Lord A."/>
            <person name="Lu C."/>
            <person name="Majoros W.H."/>
            <person name="May G.S."/>
            <person name="Miller B.L."/>
            <person name="Mohamoud Y."/>
            <person name="Molina M."/>
            <person name="Monod M."/>
            <person name="Mouyna I."/>
            <person name="Mulligan S."/>
            <person name="Murphy L.D."/>
            <person name="O'Neil S."/>
            <person name="Paulsen I."/>
            <person name="Penalva M.A."/>
            <person name="Pertea M."/>
            <person name="Price C."/>
            <person name="Pritchard B.L."/>
            <person name="Quail M.A."/>
            <person name="Rabbinowitsch E."/>
            <person name="Rawlins N."/>
            <person name="Rajandream M.A."/>
            <person name="Reichard U."/>
            <person name="Renauld H."/>
            <person name="Robson G.D."/>
            <person name="Rodriguez de Cordoba S."/>
            <person name="Rodriguez-Pena J.M."/>
            <person name="Ronning C.M."/>
            <person name="Rutter S."/>
            <person name="Salzberg S.L."/>
            <person name="Sanchez M."/>
            <person name="Sanchez-Ferrero J.C."/>
            <person name="Saunders D."/>
            <person name="Seeger K."/>
            <person name="Squares R."/>
            <person name="Squares S."/>
            <person name="Takeuchi M."/>
            <person name="Tekaia F."/>
            <person name="Turner G."/>
            <person name="Vazquez de Aldana C.R."/>
            <person name="Weidman J."/>
            <person name="White O."/>
            <person name="Woodward J.R."/>
            <person name="Yu J.-H."/>
            <person name="Fraser C.M."/>
            <person name="Galagan J.E."/>
            <person name="Asai K."/>
            <person name="Machida M."/>
            <person name="Hall N."/>
            <person name="Barrell B.G."/>
            <person name="Denning D.W."/>
        </authorList>
    </citation>
    <scope>NUCLEOTIDE SEQUENCE [LARGE SCALE GENOMIC DNA]</scope>
    <source>
        <strain>ATCC MYA-4609 / CBS 101355 / FGSC A1100 / Af293</strain>
    </source>
</reference>
<keyword id="KW-0333">Golgi apparatus</keyword>
<keyword id="KW-0472">Membrane</keyword>
<keyword id="KW-1185">Reference proteome</keyword>
<keyword id="KW-0812">Transmembrane</keyword>
<keyword id="KW-1133">Transmembrane helix</keyword>
<evidence type="ECO:0000250" key="1"/>
<evidence type="ECO:0000255" key="2"/>
<evidence type="ECO:0000305" key="3"/>
<proteinExistence type="inferred from homology"/>
<organism>
    <name type="scientific">Aspergillus fumigatus (strain ATCC MYA-4609 / CBS 101355 / FGSC A1100 / Af293)</name>
    <name type="common">Neosartorya fumigata</name>
    <dbReference type="NCBI Taxonomy" id="330879"/>
    <lineage>
        <taxon>Eukaryota</taxon>
        <taxon>Fungi</taxon>
        <taxon>Dikarya</taxon>
        <taxon>Ascomycota</taxon>
        <taxon>Pezizomycotina</taxon>
        <taxon>Eurotiomycetes</taxon>
        <taxon>Eurotiomycetidae</taxon>
        <taxon>Eurotiales</taxon>
        <taxon>Aspergillaceae</taxon>
        <taxon>Aspergillus</taxon>
        <taxon>Aspergillus subgen. Fumigati</taxon>
    </lineage>
</organism>
<protein>
    <recommendedName>
        <fullName>Golgi apparatus membrane protein tvp23</fullName>
    </recommendedName>
</protein>